<accession>Q7ZVR1</accession>
<accession>Q7ZZ52</accession>
<accession>Q8AUI8</accession>
<accession>Q8AW19</accession>
<accession>Q8JFV9</accession>
<feature type="chain" id="PRO_0000051431" description="WD repeat-containing protein 75">
    <location>
        <begin position="1"/>
        <end position="832"/>
    </location>
</feature>
<feature type="repeat" description="WD 1">
    <location>
        <begin position="4"/>
        <end position="43"/>
    </location>
</feature>
<feature type="repeat" description="WD 2">
    <location>
        <begin position="47"/>
        <end position="86"/>
    </location>
</feature>
<feature type="repeat" description="WD 3">
    <location>
        <begin position="90"/>
        <end position="134"/>
    </location>
</feature>
<feature type="repeat" description="WD 4">
    <location>
        <begin position="148"/>
        <end position="187"/>
    </location>
</feature>
<feature type="repeat" description="WD 5">
    <location>
        <begin position="196"/>
        <end position="233"/>
    </location>
</feature>
<feature type="repeat" description="WD 6">
    <location>
        <begin position="239"/>
        <end position="278"/>
    </location>
</feature>
<feature type="repeat" description="WD 7">
    <location>
        <begin position="281"/>
        <end position="320"/>
    </location>
</feature>
<feature type="repeat" description="WD 8">
    <location>
        <begin position="326"/>
        <end position="364"/>
    </location>
</feature>
<feature type="repeat" description="WD 9">
    <location>
        <begin position="378"/>
        <end position="425"/>
    </location>
</feature>
<feature type="repeat" description="WD 10">
    <location>
        <begin position="432"/>
        <end position="474"/>
    </location>
</feature>
<feature type="repeat" description="WD 11">
    <location>
        <begin position="485"/>
        <end position="523"/>
    </location>
</feature>
<feature type="repeat" description="WD 12">
    <location>
        <begin position="527"/>
        <end position="567"/>
    </location>
</feature>
<feature type="repeat" description="WD 13">
    <location>
        <begin position="572"/>
        <end position="609"/>
    </location>
</feature>
<feature type="region of interest" description="Disordered" evidence="2">
    <location>
        <begin position="704"/>
        <end position="723"/>
    </location>
</feature>
<feature type="region of interest" description="Disordered" evidence="2">
    <location>
        <begin position="759"/>
        <end position="811"/>
    </location>
</feature>
<feature type="compositionally biased region" description="Acidic residues" evidence="2">
    <location>
        <begin position="764"/>
        <end position="785"/>
    </location>
</feature>
<feature type="compositionally biased region" description="Basic and acidic residues" evidence="2">
    <location>
        <begin position="799"/>
        <end position="811"/>
    </location>
</feature>
<feature type="sequence conflict" description="In Ref. 1; CAD52133." evidence="3" ref="1">
    <original>F</original>
    <variation>I</variation>
    <location>
        <position position="390"/>
    </location>
</feature>
<feature type="sequence conflict" description="In Ref. 2; AAH45446." evidence="3" ref="2">
    <original>E</original>
    <variation>G</variation>
    <location>
        <position position="517"/>
    </location>
</feature>
<name>WDR75_DANRE</name>
<sequence>MVEKTDIRVVRCGGSKINFRPPIISHDSRFVLCVSGDSVKVYSTRTEEWLHNLQGHNNQVTGIAFNPANQLQVYSCSADGTVKLWDFIDGILIKTFVIGYPLYSLYVSEKHEGVIFLIVSMVTDSNNESFQLVAVHLPKSAEQEVEAKELSTVASKISPNPSCTAFGRGGEFIAFSRHLQLNVYFFRKQKTYSFSLKATDKKAGKNAFTCVACHPTDDCIASGHEDGKIRLWRNFNHKKEYTYSTKHWHHDAVNHLCFTPEGSNLLSGGIESVLVQWQYGDMSKKEFLPRLGGSISHVSASADGQLFCTAHSDNKISIIESSFKVSGLIQGLVRGDAVSTDLMIDPRSKALVLNGKPGHLQFYSLLRDKHLYNLDIVQQEYIYEAGLDQFEVVKAVFDVKGSWLATVEERGHKTSDLEFFLKLWAFDETTQSFVLNTTVTEAHSERITSMCFSSSEETTMLVTTALDGQFKAWCQTADAQQAQNYWSCDFVGSYHNLKPKNCCFSADGSILAVSFQEVLTLWSPETWELLTTLCQPPGEIRDLCFGRLSCSKYLLSTTTKNLLCCWNLLTCALEWSTSVDVSRLQSDPLSENVAAFSFESKHTHLFVFKPSEPRPLFSQRYVCLERVDRAVFVPREEPFNSCDESCQWLNRSQLYFLTHNMDLLTFSSATEEDRMLSSSKRLVIDESVAVTPFYLLLGRHRKQQHKLNTETQEPADKPQHTQGSVTIKQLLHTPAHVLPAASVLCSMFVRSLLISNTGVREEMDSSEQEMDSEKEEEESEEEMEACDGQQELRAQGSVDEQKPKLSKAQERELKSLRKTDFSWMTSLIDSKP</sequence>
<proteinExistence type="evidence at transcript level"/>
<keyword id="KW-0539">Nucleus</keyword>
<keyword id="KW-1185">Reference proteome</keyword>
<keyword id="KW-0677">Repeat</keyword>
<keyword id="KW-0690">Ribosome biogenesis</keyword>
<keyword id="KW-0698">rRNA processing</keyword>
<keyword id="KW-0804">Transcription</keyword>
<keyword id="KW-0805">Transcription regulation</keyword>
<keyword id="KW-0853">WD repeat</keyword>
<evidence type="ECO:0000250" key="1">
    <source>
        <dbReference type="UniProtKB" id="Q8IWA0"/>
    </source>
</evidence>
<evidence type="ECO:0000256" key="2">
    <source>
        <dbReference type="SAM" id="MobiDB-lite"/>
    </source>
</evidence>
<evidence type="ECO:0000305" key="3"/>
<comment type="function">
    <text evidence="1">Ribosome biogenesis factor. Part of the small subunit (SSU) processome, first precursor of the small eukaryotic ribosomal subunit. During the assembly of the SSU processome in the nucleolus, many ribosome biogenesis factors, an RNA chaperone and ribosomal proteins associate with the nascent pre-rRNA and work in concert to generate RNA folding, modifications, rearrangements and cleavage as well as targeted degradation of pre-ribosomal RNA by the RNA exosome. Involved in nucleolar processing of pre-18S ribosomal RNA. Required for optimal pre-ribosomal RNA transcription by RNA polymerase I.</text>
</comment>
<comment type="subunit">
    <text evidence="1">Component of the proposed t-UTP subcomplex of the ribosomal small subunit (SSU) processome. SSU processome is composed of more than 70 proteins and the RNA chaperone small nucleolar RNA (snoRNA) U3.</text>
</comment>
<comment type="subcellular location">
    <subcellularLocation>
        <location evidence="1">Nucleus</location>
        <location evidence="1">Nucleolus</location>
    </subcellularLocation>
</comment>
<comment type="sequence caution" evidence="3">
    <conflict type="erroneous gene model prediction">
        <sequence resource="EMBL-CDS" id="CAD52129"/>
    </conflict>
</comment>
<comment type="sequence caution" evidence="3">
    <conflict type="erroneous gene model prediction">
        <sequence resource="EMBL-CDS" id="CAD52133"/>
    </conflict>
</comment>
<comment type="sequence caution" evidence="3">
    <conflict type="erroneous gene model prediction">
        <sequence resource="EMBL-CDS" id="CAD58775"/>
    </conflict>
</comment>
<comment type="sequence caution" evidence="3">
    <conflict type="erroneous gene model prediction">
        <sequence resource="EMBL-CDS" id="CAD61075"/>
    </conflict>
</comment>
<dbReference type="EMBL" id="AL591593">
    <property type="protein sequence ID" value="CAD43475.1"/>
    <property type="molecule type" value="Genomic_DNA"/>
</dbReference>
<dbReference type="EMBL" id="AL672118">
    <property type="protein sequence ID" value="CAD52129.1"/>
    <property type="status" value="ALT_SEQ"/>
    <property type="molecule type" value="Genomic_DNA"/>
</dbReference>
<dbReference type="EMBL" id="AL672166">
    <property type="protein sequence ID" value="CAD52133.1"/>
    <property type="status" value="ALT_SEQ"/>
    <property type="molecule type" value="Genomic_DNA"/>
</dbReference>
<dbReference type="EMBL" id="AL672145">
    <property type="protein sequence ID" value="CAD58775.1"/>
    <property type="status" value="ALT_SEQ"/>
    <property type="molecule type" value="Genomic_DNA"/>
</dbReference>
<dbReference type="EMBL" id="AL731861">
    <property type="protein sequence ID" value="CAD61075.1"/>
    <property type="status" value="ALT_SEQ"/>
    <property type="molecule type" value="Genomic_DNA"/>
</dbReference>
<dbReference type="EMBL" id="BC045446">
    <property type="protein sequence ID" value="AAH45446.1"/>
    <property type="molecule type" value="mRNA"/>
</dbReference>
<dbReference type="RefSeq" id="NP_956384.1">
    <property type="nucleotide sequence ID" value="NM_200090.1"/>
</dbReference>
<dbReference type="SMR" id="Q7ZVR1"/>
<dbReference type="FunCoup" id="Q7ZVR1">
    <property type="interactions" value="1986"/>
</dbReference>
<dbReference type="STRING" id="7955.ENSDARP00000059666"/>
<dbReference type="PaxDb" id="7955-ENSDARP00000059666"/>
<dbReference type="Ensembl" id="ENSDART00000059667">
    <property type="protein sequence ID" value="ENSDARP00000059666"/>
    <property type="gene ID" value="ENSDARG00000040730"/>
</dbReference>
<dbReference type="GeneID" id="368478"/>
<dbReference type="KEGG" id="dre:368478"/>
<dbReference type="AGR" id="ZFIN:ZDB-GENE-030616-5"/>
<dbReference type="CTD" id="84128"/>
<dbReference type="ZFIN" id="ZDB-GENE-030616-5">
    <property type="gene designation" value="wdr75"/>
</dbReference>
<dbReference type="eggNOG" id="KOG1963">
    <property type="taxonomic scope" value="Eukaryota"/>
</dbReference>
<dbReference type="HOGENOM" id="CLU_005417_2_0_1"/>
<dbReference type="InParanoid" id="Q7ZVR1"/>
<dbReference type="OMA" id="WILNTRI"/>
<dbReference type="OrthoDB" id="4096at2759"/>
<dbReference type="PhylomeDB" id="Q7ZVR1"/>
<dbReference type="TreeFam" id="TF323469"/>
<dbReference type="PRO" id="PR:Q7ZVR1"/>
<dbReference type="Proteomes" id="UP000000437">
    <property type="component" value="Chromosome 9"/>
</dbReference>
<dbReference type="Bgee" id="ENSDARG00000040730">
    <property type="expression patterns" value="Expressed in blastula and 43 other cell types or tissues"/>
</dbReference>
<dbReference type="GO" id="GO:0005730">
    <property type="term" value="C:nucleolus"/>
    <property type="evidence" value="ECO:0000318"/>
    <property type="project" value="GO_Central"/>
</dbReference>
<dbReference type="GO" id="GO:0032040">
    <property type="term" value="C:small-subunit processome"/>
    <property type="evidence" value="ECO:0000250"/>
    <property type="project" value="UniProtKB"/>
</dbReference>
<dbReference type="GO" id="GO:0003723">
    <property type="term" value="F:RNA binding"/>
    <property type="evidence" value="ECO:0000318"/>
    <property type="project" value="GO_Central"/>
</dbReference>
<dbReference type="GO" id="GO:2000234">
    <property type="term" value="P:positive regulation of rRNA processing"/>
    <property type="evidence" value="ECO:0000318"/>
    <property type="project" value="GO_Central"/>
</dbReference>
<dbReference type="GO" id="GO:0045943">
    <property type="term" value="P:positive regulation of transcription by RNA polymerase I"/>
    <property type="evidence" value="ECO:0000318"/>
    <property type="project" value="GO_Central"/>
</dbReference>
<dbReference type="GO" id="GO:0042274">
    <property type="term" value="P:ribosomal small subunit biogenesis"/>
    <property type="evidence" value="ECO:0000250"/>
    <property type="project" value="UniProtKB"/>
</dbReference>
<dbReference type="GO" id="GO:0006364">
    <property type="term" value="P:rRNA processing"/>
    <property type="evidence" value="ECO:0007669"/>
    <property type="project" value="UniProtKB-KW"/>
</dbReference>
<dbReference type="Gene3D" id="2.130.10.10">
    <property type="entry name" value="YVTN repeat-like/Quinoprotein amine dehydrogenase"/>
    <property type="match status" value="3"/>
</dbReference>
<dbReference type="InterPro" id="IPR011047">
    <property type="entry name" value="Quinoprotein_ADH-like_sf"/>
</dbReference>
<dbReference type="InterPro" id="IPR015943">
    <property type="entry name" value="WD40/YVTN_repeat-like_dom_sf"/>
</dbReference>
<dbReference type="InterPro" id="IPR036322">
    <property type="entry name" value="WD40_repeat_dom_sf"/>
</dbReference>
<dbReference type="InterPro" id="IPR001680">
    <property type="entry name" value="WD40_rpt"/>
</dbReference>
<dbReference type="InterPro" id="IPR053826">
    <property type="entry name" value="WDR75"/>
</dbReference>
<dbReference type="PANTHER" id="PTHR44215">
    <property type="entry name" value="WD REPEAT-CONTAINING PROTEIN 75"/>
    <property type="match status" value="1"/>
</dbReference>
<dbReference type="PANTHER" id="PTHR44215:SF1">
    <property type="entry name" value="WD REPEAT-CONTAINING PROTEIN 75"/>
    <property type="match status" value="1"/>
</dbReference>
<dbReference type="Pfam" id="PF23869">
    <property type="entry name" value="Beta-prop_WDR75_1st"/>
    <property type="match status" value="1"/>
</dbReference>
<dbReference type="Pfam" id="PF23769">
    <property type="entry name" value="Beta-prop_WDR75_2nd"/>
    <property type="match status" value="1"/>
</dbReference>
<dbReference type="SMART" id="SM00320">
    <property type="entry name" value="WD40"/>
    <property type="match status" value="7"/>
</dbReference>
<dbReference type="SUPFAM" id="SSF50998">
    <property type="entry name" value="Quinoprotein alcohol dehydrogenase-like"/>
    <property type="match status" value="1"/>
</dbReference>
<dbReference type="SUPFAM" id="SSF50978">
    <property type="entry name" value="WD40 repeat-like"/>
    <property type="match status" value="1"/>
</dbReference>
<dbReference type="PROSITE" id="PS00678">
    <property type="entry name" value="WD_REPEATS_1"/>
    <property type="match status" value="1"/>
</dbReference>
<dbReference type="PROSITE" id="PS50082">
    <property type="entry name" value="WD_REPEATS_2"/>
    <property type="match status" value="2"/>
</dbReference>
<dbReference type="PROSITE" id="PS50294">
    <property type="entry name" value="WD_REPEATS_REGION"/>
    <property type="match status" value="2"/>
</dbReference>
<reference key="1">
    <citation type="journal article" date="2013" name="Nature">
        <title>The zebrafish reference genome sequence and its relationship to the human genome.</title>
        <authorList>
            <person name="Howe K."/>
            <person name="Clark M.D."/>
            <person name="Torroja C.F."/>
            <person name="Torrance J."/>
            <person name="Berthelot C."/>
            <person name="Muffato M."/>
            <person name="Collins J.E."/>
            <person name="Humphray S."/>
            <person name="McLaren K."/>
            <person name="Matthews L."/>
            <person name="McLaren S."/>
            <person name="Sealy I."/>
            <person name="Caccamo M."/>
            <person name="Churcher C."/>
            <person name="Scott C."/>
            <person name="Barrett J.C."/>
            <person name="Koch R."/>
            <person name="Rauch G.J."/>
            <person name="White S."/>
            <person name="Chow W."/>
            <person name="Kilian B."/>
            <person name="Quintais L.T."/>
            <person name="Guerra-Assuncao J.A."/>
            <person name="Zhou Y."/>
            <person name="Gu Y."/>
            <person name="Yen J."/>
            <person name="Vogel J.H."/>
            <person name="Eyre T."/>
            <person name="Redmond S."/>
            <person name="Banerjee R."/>
            <person name="Chi J."/>
            <person name="Fu B."/>
            <person name="Langley E."/>
            <person name="Maguire S.F."/>
            <person name="Laird G.K."/>
            <person name="Lloyd D."/>
            <person name="Kenyon E."/>
            <person name="Donaldson S."/>
            <person name="Sehra H."/>
            <person name="Almeida-King J."/>
            <person name="Loveland J."/>
            <person name="Trevanion S."/>
            <person name="Jones M."/>
            <person name="Quail M."/>
            <person name="Willey D."/>
            <person name="Hunt A."/>
            <person name="Burton J."/>
            <person name="Sims S."/>
            <person name="McLay K."/>
            <person name="Plumb B."/>
            <person name="Davis J."/>
            <person name="Clee C."/>
            <person name="Oliver K."/>
            <person name="Clark R."/>
            <person name="Riddle C."/>
            <person name="Elliot D."/>
            <person name="Threadgold G."/>
            <person name="Harden G."/>
            <person name="Ware D."/>
            <person name="Begum S."/>
            <person name="Mortimore B."/>
            <person name="Kerry G."/>
            <person name="Heath P."/>
            <person name="Phillimore B."/>
            <person name="Tracey A."/>
            <person name="Corby N."/>
            <person name="Dunn M."/>
            <person name="Johnson C."/>
            <person name="Wood J."/>
            <person name="Clark S."/>
            <person name="Pelan S."/>
            <person name="Griffiths G."/>
            <person name="Smith M."/>
            <person name="Glithero R."/>
            <person name="Howden P."/>
            <person name="Barker N."/>
            <person name="Lloyd C."/>
            <person name="Stevens C."/>
            <person name="Harley J."/>
            <person name="Holt K."/>
            <person name="Panagiotidis G."/>
            <person name="Lovell J."/>
            <person name="Beasley H."/>
            <person name="Henderson C."/>
            <person name="Gordon D."/>
            <person name="Auger K."/>
            <person name="Wright D."/>
            <person name="Collins J."/>
            <person name="Raisen C."/>
            <person name="Dyer L."/>
            <person name="Leung K."/>
            <person name="Robertson L."/>
            <person name="Ambridge K."/>
            <person name="Leongamornlert D."/>
            <person name="McGuire S."/>
            <person name="Gilderthorp R."/>
            <person name="Griffiths C."/>
            <person name="Manthravadi D."/>
            <person name="Nichol S."/>
            <person name="Barker G."/>
            <person name="Whitehead S."/>
            <person name="Kay M."/>
            <person name="Brown J."/>
            <person name="Murnane C."/>
            <person name="Gray E."/>
            <person name="Humphries M."/>
            <person name="Sycamore N."/>
            <person name="Barker D."/>
            <person name="Saunders D."/>
            <person name="Wallis J."/>
            <person name="Babbage A."/>
            <person name="Hammond S."/>
            <person name="Mashreghi-Mohammadi M."/>
            <person name="Barr L."/>
            <person name="Martin S."/>
            <person name="Wray P."/>
            <person name="Ellington A."/>
            <person name="Matthews N."/>
            <person name="Ellwood M."/>
            <person name="Woodmansey R."/>
            <person name="Clark G."/>
            <person name="Cooper J."/>
            <person name="Tromans A."/>
            <person name="Grafham D."/>
            <person name="Skuce C."/>
            <person name="Pandian R."/>
            <person name="Andrews R."/>
            <person name="Harrison E."/>
            <person name="Kimberley A."/>
            <person name="Garnett J."/>
            <person name="Fosker N."/>
            <person name="Hall R."/>
            <person name="Garner P."/>
            <person name="Kelly D."/>
            <person name="Bird C."/>
            <person name="Palmer S."/>
            <person name="Gehring I."/>
            <person name="Berger A."/>
            <person name="Dooley C.M."/>
            <person name="Ersan-Urun Z."/>
            <person name="Eser C."/>
            <person name="Geiger H."/>
            <person name="Geisler M."/>
            <person name="Karotki L."/>
            <person name="Kirn A."/>
            <person name="Konantz J."/>
            <person name="Konantz M."/>
            <person name="Oberlander M."/>
            <person name="Rudolph-Geiger S."/>
            <person name="Teucke M."/>
            <person name="Lanz C."/>
            <person name="Raddatz G."/>
            <person name="Osoegawa K."/>
            <person name="Zhu B."/>
            <person name="Rapp A."/>
            <person name="Widaa S."/>
            <person name="Langford C."/>
            <person name="Yang F."/>
            <person name="Schuster S.C."/>
            <person name="Carter N.P."/>
            <person name="Harrow J."/>
            <person name="Ning Z."/>
            <person name="Herrero J."/>
            <person name="Searle S.M."/>
            <person name="Enright A."/>
            <person name="Geisler R."/>
            <person name="Plasterk R.H."/>
            <person name="Lee C."/>
            <person name="Westerfield M."/>
            <person name="de Jong P.J."/>
            <person name="Zon L.I."/>
            <person name="Postlethwait J.H."/>
            <person name="Nusslein-Volhard C."/>
            <person name="Hubbard T.J."/>
            <person name="Roest Crollius H."/>
            <person name="Rogers J."/>
            <person name="Stemple D.L."/>
        </authorList>
    </citation>
    <scope>NUCLEOTIDE SEQUENCE [LARGE SCALE GENOMIC DNA]</scope>
    <source>
        <strain>Tuebingen</strain>
    </source>
</reference>
<reference key="2">
    <citation type="submission" date="2003-01" db="EMBL/GenBank/DDBJ databases">
        <authorList>
            <consortium name="NIH - Zebrafish Gene Collection (ZGC) project"/>
        </authorList>
    </citation>
    <scope>NUCLEOTIDE SEQUENCE [LARGE SCALE MRNA]</scope>
    <source>
        <strain>AB</strain>
    </source>
</reference>
<protein>
    <recommendedName>
        <fullName>WD repeat-containing protein 75</fullName>
    </recommendedName>
</protein>
<gene>
    <name type="primary">wdr75</name>
    <name type="ORF">si:dz46i22.2</name>
    <name type="ORF">si:xx-113d7.2</name>
</gene>
<organism>
    <name type="scientific">Danio rerio</name>
    <name type="common">Zebrafish</name>
    <name type="synonym">Brachydanio rerio</name>
    <dbReference type="NCBI Taxonomy" id="7955"/>
    <lineage>
        <taxon>Eukaryota</taxon>
        <taxon>Metazoa</taxon>
        <taxon>Chordata</taxon>
        <taxon>Craniata</taxon>
        <taxon>Vertebrata</taxon>
        <taxon>Euteleostomi</taxon>
        <taxon>Actinopterygii</taxon>
        <taxon>Neopterygii</taxon>
        <taxon>Teleostei</taxon>
        <taxon>Ostariophysi</taxon>
        <taxon>Cypriniformes</taxon>
        <taxon>Danionidae</taxon>
        <taxon>Danioninae</taxon>
        <taxon>Danio</taxon>
    </lineage>
</organism>